<sequence length="86" mass="8968">MAHKKGASSSRNGRDSAAQRLGVKRYGGQVVKAGEILVRQRGTKFHPGVNVGRGGDDTLFAKTAGAVEFGIKRGRKTVSIVGSTTA</sequence>
<reference key="1">
    <citation type="journal article" date="1998" name="Nature">
        <title>Deciphering the biology of Mycobacterium tuberculosis from the complete genome sequence.</title>
        <authorList>
            <person name="Cole S.T."/>
            <person name="Brosch R."/>
            <person name="Parkhill J."/>
            <person name="Garnier T."/>
            <person name="Churcher C.M."/>
            <person name="Harris D.E."/>
            <person name="Gordon S.V."/>
            <person name="Eiglmeier K."/>
            <person name="Gas S."/>
            <person name="Barry C.E. III"/>
            <person name="Tekaia F."/>
            <person name="Badcock K."/>
            <person name="Basham D."/>
            <person name="Brown D."/>
            <person name="Chillingworth T."/>
            <person name="Connor R."/>
            <person name="Davies R.M."/>
            <person name="Devlin K."/>
            <person name="Feltwell T."/>
            <person name="Gentles S."/>
            <person name="Hamlin N."/>
            <person name="Holroyd S."/>
            <person name="Hornsby T."/>
            <person name="Jagels K."/>
            <person name="Krogh A."/>
            <person name="McLean J."/>
            <person name="Moule S."/>
            <person name="Murphy L.D."/>
            <person name="Oliver S."/>
            <person name="Osborne J."/>
            <person name="Quail M.A."/>
            <person name="Rajandream M.A."/>
            <person name="Rogers J."/>
            <person name="Rutter S."/>
            <person name="Seeger K."/>
            <person name="Skelton S."/>
            <person name="Squares S."/>
            <person name="Squares R."/>
            <person name="Sulston J.E."/>
            <person name="Taylor K."/>
            <person name="Whitehead S."/>
            <person name="Barrell B.G."/>
        </authorList>
    </citation>
    <scope>NUCLEOTIDE SEQUENCE [LARGE SCALE GENOMIC DNA]</scope>
    <source>
        <strain>ATCC 25618 / H37Rv</strain>
    </source>
</reference>
<reference key="2">
    <citation type="journal article" date="2011" name="Mol. Cell. Proteomics">
        <title>Proteogenomic analysis of Mycobacterium tuberculosis by high resolution mass spectrometry.</title>
        <authorList>
            <person name="Kelkar D.S."/>
            <person name="Kumar D."/>
            <person name="Kumar P."/>
            <person name="Balakrishnan L."/>
            <person name="Muthusamy B."/>
            <person name="Yadav A.K."/>
            <person name="Shrivastava P."/>
            <person name="Marimuthu A."/>
            <person name="Anand S."/>
            <person name="Sundaram H."/>
            <person name="Kingsbury R."/>
            <person name="Harsha H.C."/>
            <person name="Nair B."/>
            <person name="Prasad T.S."/>
            <person name="Chauhan D.S."/>
            <person name="Katoch K."/>
            <person name="Katoch V.M."/>
            <person name="Kumar P."/>
            <person name="Chaerkady R."/>
            <person name="Ramachandran S."/>
            <person name="Dash D."/>
            <person name="Pandey A."/>
        </authorList>
    </citation>
    <scope>IDENTIFICATION BY MASS SPECTROMETRY [LARGE SCALE ANALYSIS]</scope>
    <source>
        <strain>ATCC 25618 / H37Rv</strain>
    </source>
</reference>
<protein>
    <recommendedName>
        <fullName evidence="2">Large ribosomal subunit protein bL27</fullName>
    </recommendedName>
    <alternativeName>
        <fullName>50S ribosomal protein L27</fullName>
    </alternativeName>
</protein>
<dbReference type="EMBL" id="AL123456">
    <property type="protein sequence ID" value="CCP45234.1"/>
    <property type="molecule type" value="Genomic_DNA"/>
</dbReference>
<dbReference type="PIR" id="G70680">
    <property type="entry name" value="G70680"/>
</dbReference>
<dbReference type="RefSeq" id="NP_216957.1">
    <property type="nucleotide sequence ID" value="NC_000962.3"/>
</dbReference>
<dbReference type="RefSeq" id="WP_003412574.1">
    <property type="nucleotide sequence ID" value="NZ_NVQJ01000024.1"/>
</dbReference>
<dbReference type="PDB" id="5V7Q">
    <property type="method" value="EM"/>
    <property type="resolution" value="3.70 A"/>
    <property type="chains" value="W=1-86"/>
</dbReference>
<dbReference type="PDB" id="5V93">
    <property type="method" value="EM"/>
    <property type="resolution" value="4.00 A"/>
    <property type="chains" value="W=1-86"/>
</dbReference>
<dbReference type="PDB" id="7KGB">
    <property type="method" value="EM"/>
    <property type="resolution" value="2.70 A"/>
    <property type="chains" value="W=1-86"/>
</dbReference>
<dbReference type="PDB" id="7MSC">
    <property type="method" value="EM"/>
    <property type="resolution" value="2.97 A"/>
    <property type="chains" value="W=1-86"/>
</dbReference>
<dbReference type="PDB" id="7MSH">
    <property type="method" value="EM"/>
    <property type="resolution" value="3.23 A"/>
    <property type="chains" value="W=1-86"/>
</dbReference>
<dbReference type="PDB" id="7MSM">
    <property type="method" value="EM"/>
    <property type="resolution" value="2.79 A"/>
    <property type="chains" value="W=1-86"/>
</dbReference>
<dbReference type="PDB" id="7MSZ">
    <property type="method" value="EM"/>
    <property type="resolution" value="3.10 A"/>
    <property type="chains" value="W=1-86"/>
</dbReference>
<dbReference type="PDB" id="7MT2">
    <property type="method" value="EM"/>
    <property type="resolution" value="2.76 A"/>
    <property type="chains" value="W=1-86"/>
</dbReference>
<dbReference type="PDB" id="7MT3">
    <property type="method" value="EM"/>
    <property type="resolution" value="2.80 A"/>
    <property type="chains" value="W=1-86"/>
</dbReference>
<dbReference type="PDB" id="7MT7">
    <property type="method" value="EM"/>
    <property type="resolution" value="2.71 A"/>
    <property type="chains" value="W=1-86"/>
</dbReference>
<dbReference type="PDB" id="7SFR">
    <property type="method" value="EM"/>
    <property type="resolution" value="2.60 A"/>
    <property type="chains" value="W=1-86"/>
</dbReference>
<dbReference type="PDBsum" id="5V7Q"/>
<dbReference type="PDBsum" id="5V93"/>
<dbReference type="PDBsum" id="7KGB"/>
<dbReference type="PDBsum" id="7MSC"/>
<dbReference type="PDBsum" id="7MSH"/>
<dbReference type="PDBsum" id="7MSM"/>
<dbReference type="PDBsum" id="7MSZ"/>
<dbReference type="PDBsum" id="7MT2"/>
<dbReference type="PDBsum" id="7MT3"/>
<dbReference type="PDBsum" id="7MT7"/>
<dbReference type="PDBsum" id="7SFR"/>
<dbReference type="EMDB" id="EMD-22865"/>
<dbReference type="EMDB" id="EMD-23961"/>
<dbReference type="EMDB" id="EMD-23962"/>
<dbReference type="EMDB" id="EMD-23969"/>
<dbReference type="EMDB" id="EMD-23972"/>
<dbReference type="EMDB" id="EMD-23974"/>
<dbReference type="EMDB" id="EMD-23975"/>
<dbReference type="EMDB" id="EMD-23976"/>
<dbReference type="EMDB" id="EMD-8645"/>
<dbReference type="SMR" id="P9WHB3"/>
<dbReference type="FunCoup" id="P9WHB3">
    <property type="interactions" value="216"/>
</dbReference>
<dbReference type="STRING" id="83332.Rv2441c"/>
<dbReference type="PaxDb" id="83332-Rv2441c"/>
<dbReference type="DNASU" id="885919"/>
<dbReference type="GeneID" id="45426431"/>
<dbReference type="GeneID" id="885919"/>
<dbReference type="KEGG" id="mtu:Rv2441c"/>
<dbReference type="KEGG" id="mtv:RVBD_2441c"/>
<dbReference type="TubercuList" id="Rv2441c"/>
<dbReference type="eggNOG" id="COG0211">
    <property type="taxonomic scope" value="Bacteria"/>
</dbReference>
<dbReference type="InParanoid" id="P9WHB3"/>
<dbReference type="OrthoDB" id="9803474at2"/>
<dbReference type="PhylomeDB" id="P9WHB3"/>
<dbReference type="PRO" id="PR:P9WHB3"/>
<dbReference type="Proteomes" id="UP000001584">
    <property type="component" value="Chromosome"/>
</dbReference>
<dbReference type="GO" id="GO:0022625">
    <property type="term" value="C:cytosolic large ribosomal subunit"/>
    <property type="evidence" value="ECO:0000318"/>
    <property type="project" value="GO_Central"/>
</dbReference>
<dbReference type="GO" id="GO:0009274">
    <property type="term" value="C:peptidoglycan-based cell wall"/>
    <property type="evidence" value="ECO:0007005"/>
    <property type="project" value="MTBBASE"/>
</dbReference>
<dbReference type="GO" id="GO:0005886">
    <property type="term" value="C:plasma membrane"/>
    <property type="evidence" value="ECO:0007005"/>
    <property type="project" value="MTBBASE"/>
</dbReference>
<dbReference type="GO" id="GO:0003735">
    <property type="term" value="F:structural constituent of ribosome"/>
    <property type="evidence" value="ECO:0000318"/>
    <property type="project" value="GO_Central"/>
</dbReference>
<dbReference type="GO" id="GO:0006412">
    <property type="term" value="P:translation"/>
    <property type="evidence" value="ECO:0007669"/>
    <property type="project" value="UniProtKB-UniRule"/>
</dbReference>
<dbReference type="FunFam" id="2.40.50.100:FF:000020">
    <property type="entry name" value="50S ribosomal protein L27"/>
    <property type="match status" value="1"/>
</dbReference>
<dbReference type="Gene3D" id="2.40.50.100">
    <property type="match status" value="1"/>
</dbReference>
<dbReference type="HAMAP" id="MF_00539">
    <property type="entry name" value="Ribosomal_bL27"/>
    <property type="match status" value="1"/>
</dbReference>
<dbReference type="InterPro" id="IPR001684">
    <property type="entry name" value="Ribosomal_bL27"/>
</dbReference>
<dbReference type="InterPro" id="IPR018261">
    <property type="entry name" value="Ribosomal_bL27_CS"/>
</dbReference>
<dbReference type="NCBIfam" id="TIGR00062">
    <property type="entry name" value="L27"/>
    <property type="match status" value="1"/>
</dbReference>
<dbReference type="PANTHER" id="PTHR15893:SF0">
    <property type="entry name" value="LARGE RIBOSOMAL SUBUNIT PROTEIN BL27M"/>
    <property type="match status" value="1"/>
</dbReference>
<dbReference type="PANTHER" id="PTHR15893">
    <property type="entry name" value="RIBOSOMAL PROTEIN L27"/>
    <property type="match status" value="1"/>
</dbReference>
<dbReference type="Pfam" id="PF01016">
    <property type="entry name" value="Ribosomal_L27"/>
    <property type="match status" value="1"/>
</dbReference>
<dbReference type="PRINTS" id="PR00063">
    <property type="entry name" value="RIBOSOMALL27"/>
</dbReference>
<dbReference type="SUPFAM" id="SSF110324">
    <property type="entry name" value="Ribosomal L27 protein-like"/>
    <property type="match status" value="1"/>
</dbReference>
<dbReference type="PROSITE" id="PS00831">
    <property type="entry name" value="RIBOSOMAL_L27"/>
    <property type="match status" value="1"/>
</dbReference>
<gene>
    <name type="primary">rpmA</name>
    <name type="ordered locus">Rv2441c</name>
    <name type="ORF">MTCY428.05</name>
</gene>
<feature type="chain" id="PRO_0000181130" description="Large ribosomal subunit protein bL27">
    <location>
        <begin position="1"/>
        <end position="86"/>
    </location>
</feature>
<feature type="region of interest" description="Disordered" evidence="1">
    <location>
        <begin position="1"/>
        <end position="21"/>
    </location>
</feature>
<keyword id="KW-0002">3D-structure</keyword>
<keyword id="KW-1185">Reference proteome</keyword>
<keyword id="KW-0687">Ribonucleoprotein</keyword>
<keyword id="KW-0689">Ribosomal protein</keyword>
<evidence type="ECO:0000256" key="1">
    <source>
        <dbReference type="SAM" id="MobiDB-lite"/>
    </source>
</evidence>
<evidence type="ECO:0000305" key="2"/>
<proteinExistence type="evidence at protein level"/>
<accession>P9WHB3</accession>
<accession>L0TB83</accession>
<accession>P66127</accession>
<accession>P71908</accession>
<name>RL27_MYCTU</name>
<organism>
    <name type="scientific">Mycobacterium tuberculosis (strain ATCC 25618 / H37Rv)</name>
    <dbReference type="NCBI Taxonomy" id="83332"/>
    <lineage>
        <taxon>Bacteria</taxon>
        <taxon>Bacillati</taxon>
        <taxon>Actinomycetota</taxon>
        <taxon>Actinomycetes</taxon>
        <taxon>Mycobacteriales</taxon>
        <taxon>Mycobacteriaceae</taxon>
        <taxon>Mycobacterium</taxon>
        <taxon>Mycobacterium tuberculosis complex</taxon>
    </lineage>
</organism>
<comment type="similarity">
    <text evidence="2">Belongs to the bacterial ribosomal protein bL27 family.</text>
</comment>